<dbReference type="EMBL" id="CP001252">
    <property type="protein sequence ID" value="ACK45843.1"/>
    <property type="molecule type" value="Genomic_DNA"/>
</dbReference>
<dbReference type="SMR" id="B8E927"/>
<dbReference type="KEGG" id="sbp:Sbal223_1335"/>
<dbReference type="HOGENOM" id="CLU_130694_5_0_6"/>
<dbReference type="Proteomes" id="UP000002507">
    <property type="component" value="Chromosome"/>
</dbReference>
<dbReference type="GO" id="GO:0005737">
    <property type="term" value="C:cytoplasm"/>
    <property type="evidence" value="ECO:0007669"/>
    <property type="project" value="TreeGrafter"/>
</dbReference>
<dbReference type="Gene3D" id="3.30.1200.10">
    <property type="entry name" value="YggU-like"/>
    <property type="match status" value="1"/>
</dbReference>
<dbReference type="HAMAP" id="MF_00634">
    <property type="entry name" value="UPF0235"/>
    <property type="match status" value="1"/>
</dbReference>
<dbReference type="InterPro" id="IPR003746">
    <property type="entry name" value="DUF167"/>
</dbReference>
<dbReference type="InterPro" id="IPR036591">
    <property type="entry name" value="YggU-like_sf"/>
</dbReference>
<dbReference type="NCBIfam" id="TIGR00251">
    <property type="entry name" value="DUF167 family protein"/>
    <property type="match status" value="1"/>
</dbReference>
<dbReference type="NCBIfam" id="NF003466">
    <property type="entry name" value="PRK05090.1"/>
    <property type="match status" value="1"/>
</dbReference>
<dbReference type="PANTHER" id="PTHR13420">
    <property type="entry name" value="UPF0235 PROTEIN C15ORF40"/>
    <property type="match status" value="1"/>
</dbReference>
<dbReference type="PANTHER" id="PTHR13420:SF7">
    <property type="entry name" value="UPF0235 PROTEIN C15ORF40"/>
    <property type="match status" value="1"/>
</dbReference>
<dbReference type="Pfam" id="PF02594">
    <property type="entry name" value="DUF167"/>
    <property type="match status" value="1"/>
</dbReference>
<dbReference type="SMART" id="SM01152">
    <property type="entry name" value="DUF167"/>
    <property type="match status" value="1"/>
</dbReference>
<dbReference type="SUPFAM" id="SSF69786">
    <property type="entry name" value="YggU-like"/>
    <property type="match status" value="1"/>
</dbReference>
<sequence>MSAVTLQQGDLLLNLYIQPKASRDQIVGLHGDELKVAITAPPIDGKANAHLSKYLAKTFKVPKSDIHIMKGELGRHKQIRVIDPKIIPSVITELMGQTS</sequence>
<gene>
    <name type="ordered locus">Sbal223_1335</name>
</gene>
<feature type="chain" id="PRO_1000147345" description="UPF0235 protein Sbal223_1335">
    <location>
        <begin position="1"/>
        <end position="99"/>
    </location>
</feature>
<organism>
    <name type="scientific">Shewanella baltica (strain OS223)</name>
    <dbReference type="NCBI Taxonomy" id="407976"/>
    <lineage>
        <taxon>Bacteria</taxon>
        <taxon>Pseudomonadati</taxon>
        <taxon>Pseudomonadota</taxon>
        <taxon>Gammaproteobacteria</taxon>
        <taxon>Alteromonadales</taxon>
        <taxon>Shewanellaceae</taxon>
        <taxon>Shewanella</taxon>
    </lineage>
</organism>
<accession>B8E927</accession>
<reference key="1">
    <citation type="submission" date="2008-12" db="EMBL/GenBank/DDBJ databases">
        <title>Complete sequence of chromosome of Shewanella baltica OS223.</title>
        <authorList>
            <consortium name="US DOE Joint Genome Institute"/>
            <person name="Lucas S."/>
            <person name="Copeland A."/>
            <person name="Lapidus A."/>
            <person name="Glavina del Rio T."/>
            <person name="Dalin E."/>
            <person name="Tice H."/>
            <person name="Bruce D."/>
            <person name="Goodwin L."/>
            <person name="Pitluck S."/>
            <person name="Chertkov O."/>
            <person name="Meincke L."/>
            <person name="Brettin T."/>
            <person name="Detter J.C."/>
            <person name="Han C."/>
            <person name="Kuske C.R."/>
            <person name="Larimer F."/>
            <person name="Land M."/>
            <person name="Hauser L."/>
            <person name="Kyrpides N."/>
            <person name="Ovchinnikova G."/>
            <person name="Brettar I."/>
            <person name="Rodrigues J."/>
            <person name="Konstantinidis K."/>
            <person name="Tiedje J."/>
        </authorList>
    </citation>
    <scope>NUCLEOTIDE SEQUENCE [LARGE SCALE GENOMIC DNA]</scope>
    <source>
        <strain>OS223</strain>
    </source>
</reference>
<comment type="similarity">
    <text evidence="1">Belongs to the UPF0235 family.</text>
</comment>
<name>Y1335_SHEB2</name>
<evidence type="ECO:0000255" key="1">
    <source>
        <dbReference type="HAMAP-Rule" id="MF_00634"/>
    </source>
</evidence>
<proteinExistence type="inferred from homology"/>
<protein>
    <recommendedName>
        <fullName evidence="1">UPF0235 protein Sbal223_1335</fullName>
    </recommendedName>
</protein>